<name>DNAJ1_MYCTO</name>
<organism>
    <name type="scientific">Mycobacterium tuberculosis (strain CDC 1551 / Oshkosh)</name>
    <dbReference type="NCBI Taxonomy" id="83331"/>
    <lineage>
        <taxon>Bacteria</taxon>
        <taxon>Bacillati</taxon>
        <taxon>Actinomycetota</taxon>
        <taxon>Actinomycetes</taxon>
        <taxon>Mycobacteriales</taxon>
        <taxon>Mycobacteriaceae</taxon>
        <taxon>Mycobacterium</taxon>
        <taxon>Mycobacterium tuberculosis complex</taxon>
    </lineage>
</organism>
<protein>
    <recommendedName>
        <fullName evidence="1">Chaperone protein DnaJ 1</fullName>
    </recommendedName>
</protein>
<gene>
    <name evidence="1" type="primary">dnaJ1</name>
    <name type="ordered locus">MT0367</name>
</gene>
<feature type="chain" id="PRO_0000427059" description="Chaperone protein DnaJ 1">
    <location>
        <begin position="1"/>
        <end position="395"/>
    </location>
</feature>
<feature type="domain" description="J" evidence="1">
    <location>
        <begin position="10"/>
        <end position="75"/>
    </location>
</feature>
<feature type="repeat" description="CXXCXGXG motif">
    <location>
        <begin position="177"/>
        <end position="184"/>
    </location>
</feature>
<feature type="repeat" description="CXXCXGXG motif">
    <location>
        <begin position="194"/>
        <end position="201"/>
    </location>
</feature>
<feature type="repeat" description="CXXCXGXG motif">
    <location>
        <begin position="216"/>
        <end position="223"/>
    </location>
</feature>
<feature type="repeat" description="CXXCXGXG motif">
    <location>
        <begin position="230"/>
        <end position="237"/>
    </location>
</feature>
<feature type="zinc finger region" description="CR-type" evidence="1">
    <location>
        <begin position="164"/>
        <end position="242"/>
    </location>
</feature>
<feature type="binding site" evidence="1">
    <location>
        <position position="177"/>
    </location>
    <ligand>
        <name>Zn(2+)</name>
        <dbReference type="ChEBI" id="CHEBI:29105"/>
        <label>1</label>
    </ligand>
</feature>
<feature type="binding site" evidence="1">
    <location>
        <position position="180"/>
    </location>
    <ligand>
        <name>Zn(2+)</name>
        <dbReference type="ChEBI" id="CHEBI:29105"/>
        <label>1</label>
    </ligand>
</feature>
<feature type="binding site" evidence="1">
    <location>
        <position position="194"/>
    </location>
    <ligand>
        <name>Zn(2+)</name>
        <dbReference type="ChEBI" id="CHEBI:29105"/>
        <label>2</label>
    </ligand>
</feature>
<feature type="binding site" evidence="1">
    <location>
        <position position="197"/>
    </location>
    <ligand>
        <name>Zn(2+)</name>
        <dbReference type="ChEBI" id="CHEBI:29105"/>
        <label>2</label>
    </ligand>
</feature>
<feature type="binding site" evidence="1">
    <location>
        <position position="216"/>
    </location>
    <ligand>
        <name>Zn(2+)</name>
        <dbReference type="ChEBI" id="CHEBI:29105"/>
        <label>2</label>
    </ligand>
</feature>
<feature type="binding site" evidence="1">
    <location>
        <position position="219"/>
    </location>
    <ligand>
        <name>Zn(2+)</name>
        <dbReference type="ChEBI" id="CHEBI:29105"/>
        <label>2</label>
    </ligand>
</feature>
<feature type="binding site" evidence="1">
    <location>
        <position position="230"/>
    </location>
    <ligand>
        <name>Zn(2+)</name>
        <dbReference type="ChEBI" id="CHEBI:29105"/>
        <label>1</label>
    </ligand>
</feature>
<feature type="binding site" evidence="1">
    <location>
        <position position="233"/>
    </location>
    <ligand>
        <name>Zn(2+)</name>
        <dbReference type="ChEBI" id="CHEBI:29105"/>
        <label>1</label>
    </ligand>
</feature>
<reference key="1">
    <citation type="journal article" date="2002" name="J. Bacteriol.">
        <title>Whole-genome comparison of Mycobacterium tuberculosis clinical and laboratory strains.</title>
        <authorList>
            <person name="Fleischmann R.D."/>
            <person name="Alland D."/>
            <person name="Eisen J.A."/>
            <person name="Carpenter L."/>
            <person name="White O."/>
            <person name="Peterson J.D."/>
            <person name="DeBoy R.T."/>
            <person name="Dodson R.J."/>
            <person name="Gwinn M.L."/>
            <person name="Haft D.H."/>
            <person name="Hickey E.K."/>
            <person name="Kolonay J.F."/>
            <person name="Nelson W.C."/>
            <person name="Umayam L.A."/>
            <person name="Ermolaeva M.D."/>
            <person name="Salzberg S.L."/>
            <person name="Delcher A."/>
            <person name="Utterback T.R."/>
            <person name="Weidman J.F."/>
            <person name="Khouri H.M."/>
            <person name="Gill J."/>
            <person name="Mikula A."/>
            <person name="Bishai W."/>
            <person name="Jacobs W.R. Jr."/>
            <person name="Venter J.C."/>
            <person name="Fraser C.M."/>
        </authorList>
    </citation>
    <scope>NUCLEOTIDE SEQUENCE [LARGE SCALE GENOMIC DNA]</scope>
    <source>
        <strain>CDC 1551 / Oshkosh</strain>
    </source>
</reference>
<comment type="function">
    <text evidence="1">Participates actively in the response to hyperosmotic and heat shock by preventing the aggregation of stress-denatured proteins and by disaggregating proteins, also in an autonomous, DnaK-independent fashion. Unfolded proteins bind initially to DnaJ; upon interaction with the DnaJ-bound protein, DnaK hydrolyzes its bound ATP, resulting in the formation of a stable complex. GrpE releases ADP from DnaK; ATP binding to DnaK triggers the release of the substrate protein, thus completing the reaction cycle. Several rounds of ATP-dependent interactions between DnaJ, DnaK and GrpE are required for fully efficient folding. Also involved, together with DnaK and GrpE, in the DNA replication of plasmids through activation of initiation proteins.</text>
</comment>
<comment type="cofactor">
    <cofactor evidence="1">
        <name>Zn(2+)</name>
        <dbReference type="ChEBI" id="CHEBI:29105"/>
    </cofactor>
    <text evidence="1">Binds 2 Zn(2+) ions per monomer.</text>
</comment>
<comment type="subunit">
    <text evidence="1">Homodimer.</text>
</comment>
<comment type="subcellular location">
    <subcellularLocation>
        <location evidence="1">Cytoplasm</location>
    </subcellularLocation>
</comment>
<comment type="domain">
    <text evidence="1">The J domain is necessary and sufficient to stimulate DnaK ATPase activity. Zinc center 1 plays an important role in the autonomous, DnaK-independent chaperone activity of DnaJ. Zinc center 2 is essential for interaction with DnaK and for DnaJ activity.</text>
</comment>
<comment type="similarity">
    <text evidence="1">Belongs to the DnaJ family.</text>
</comment>
<evidence type="ECO:0000255" key="1">
    <source>
        <dbReference type="HAMAP-Rule" id="MF_01152"/>
    </source>
</evidence>
<sequence>MAQREWVEKDFYQELGVSSDASPEEIKRAYRKLARDLHPDANPGNPAAGERFKAVSEAHNVLSDPAKRKEYDETRRLFAGGGFGGRRFDSGFGGGFGGFGVGGDGAEFNLNDLFDAASRTGGTTIGDLFGGLFGRGGSARPSRPRRGNDLETETELDFVEAAKGVAMPLRLTSPAPCTNCHGSGARPGTSPKVCPTCNGSGVINRNQGAFGFSEPCTDCRGSGSIIEHPCEECKGTGVTTRTRTINVRIPPGVEDGQRIRLAGQGEAGLRGAPSGDLYVTVHVRPDKIFGRDGDDLTVTVPVSFTELALGSTLSVPTLDGTVGVRVPKGTADGRILRVRGRGVPKRSGGSGDLLVTVKVAVPPNLAGAAQEALEAYAAAERSSGFNPRAGWAGNR</sequence>
<dbReference type="EMBL" id="AE000516">
    <property type="protein sequence ID" value="AAK44589.1"/>
    <property type="molecule type" value="Genomic_DNA"/>
</dbReference>
<dbReference type="PIR" id="A70575">
    <property type="entry name" value="A70575"/>
</dbReference>
<dbReference type="SMR" id="P9WNV8"/>
<dbReference type="KEGG" id="mtc:MT0367"/>
<dbReference type="PATRIC" id="fig|83331.31.peg.390"/>
<dbReference type="HOGENOM" id="CLU_017633_0_6_11"/>
<dbReference type="Proteomes" id="UP000001020">
    <property type="component" value="Chromosome"/>
</dbReference>
<dbReference type="GO" id="GO:0005737">
    <property type="term" value="C:cytoplasm"/>
    <property type="evidence" value="ECO:0007669"/>
    <property type="project" value="UniProtKB-SubCell"/>
</dbReference>
<dbReference type="GO" id="GO:0005524">
    <property type="term" value="F:ATP binding"/>
    <property type="evidence" value="ECO:0007669"/>
    <property type="project" value="InterPro"/>
</dbReference>
<dbReference type="GO" id="GO:0031072">
    <property type="term" value="F:heat shock protein binding"/>
    <property type="evidence" value="ECO:0007669"/>
    <property type="project" value="InterPro"/>
</dbReference>
<dbReference type="GO" id="GO:0051082">
    <property type="term" value="F:unfolded protein binding"/>
    <property type="evidence" value="ECO:0007669"/>
    <property type="project" value="UniProtKB-UniRule"/>
</dbReference>
<dbReference type="GO" id="GO:0008270">
    <property type="term" value="F:zinc ion binding"/>
    <property type="evidence" value="ECO:0007669"/>
    <property type="project" value="UniProtKB-UniRule"/>
</dbReference>
<dbReference type="GO" id="GO:0051085">
    <property type="term" value="P:chaperone cofactor-dependent protein refolding"/>
    <property type="evidence" value="ECO:0007669"/>
    <property type="project" value="TreeGrafter"/>
</dbReference>
<dbReference type="GO" id="GO:0006260">
    <property type="term" value="P:DNA replication"/>
    <property type="evidence" value="ECO:0007669"/>
    <property type="project" value="UniProtKB-KW"/>
</dbReference>
<dbReference type="GO" id="GO:0042026">
    <property type="term" value="P:protein refolding"/>
    <property type="evidence" value="ECO:0007669"/>
    <property type="project" value="TreeGrafter"/>
</dbReference>
<dbReference type="GO" id="GO:0009408">
    <property type="term" value="P:response to heat"/>
    <property type="evidence" value="ECO:0007669"/>
    <property type="project" value="InterPro"/>
</dbReference>
<dbReference type="CDD" id="cd06257">
    <property type="entry name" value="DnaJ"/>
    <property type="match status" value="1"/>
</dbReference>
<dbReference type="CDD" id="cd10747">
    <property type="entry name" value="DnaJ_C"/>
    <property type="match status" value="1"/>
</dbReference>
<dbReference type="CDD" id="cd10719">
    <property type="entry name" value="DnaJ_zf"/>
    <property type="match status" value="1"/>
</dbReference>
<dbReference type="FunFam" id="1.10.287.110:FF:000127">
    <property type="entry name" value="Chaperone protein DnaJ"/>
    <property type="match status" value="1"/>
</dbReference>
<dbReference type="FunFam" id="2.60.260.20:FF:000021">
    <property type="entry name" value="Chaperone protein DnaJ"/>
    <property type="match status" value="1"/>
</dbReference>
<dbReference type="FunFam" id="2.10.230.10:FF:000002">
    <property type="entry name" value="Molecular chaperone DnaJ"/>
    <property type="match status" value="1"/>
</dbReference>
<dbReference type="Gene3D" id="1.10.287.110">
    <property type="entry name" value="DnaJ domain"/>
    <property type="match status" value="1"/>
</dbReference>
<dbReference type="Gene3D" id="2.10.230.10">
    <property type="entry name" value="Heat shock protein DnaJ, cysteine-rich domain"/>
    <property type="match status" value="1"/>
</dbReference>
<dbReference type="Gene3D" id="2.60.260.20">
    <property type="entry name" value="Urease metallochaperone UreE, N-terminal domain"/>
    <property type="match status" value="2"/>
</dbReference>
<dbReference type="HAMAP" id="MF_01152">
    <property type="entry name" value="DnaJ"/>
    <property type="match status" value="1"/>
</dbReference>
<dbReference type="InterPro" id="IPR012724">
    <property type="entry name" value="DnaJ"/>
</dbReference>
<dbReference type="InterPro" id="IPR002939">
    <property type="entry name" value="DnaJ_C"/>
</dbReference>
<dbReference type="InterPro" id="IPR001623">
    <property type="entry name" value="DnaJ_domain"/>
</dbReference>
<dbReference type="InterPro" id="IPR018253">
    <property type="entry name" value="DnaJ_domain_CS"/>
</dbReference>
<dbReference type="InterPro" id="IPR008971">
    <property type="entry name" value="HSP40/DnaJ_pept-bd"/>
</dbReference>
<dbReference type="InterPro" id="IPR001305">
    <property type="entry name" value="HSP_DnaJ_Cys-rich_dom"/>
</dbReference>
<dbReference type="InterPro" id="IPR036410">
    <property type="entry name" value="HSP_DnaJ_Cys-rich_dom_sf"/>
</dbReference>
<dbReference type="InterPro" id="IPR036869">
    <property type="entry name" value="J_dom_sf"/>
</dbReference>
<dbReference type="NCBIfam" id="TIGR02349">
    <property type="entry name" value="DnaJ_bact"/>
    <property type="match status" value="1"/>
</dbReference>
<dbReference type="NCBIfam" id="NF008035">
    <property type="entry name" value="PRK10767.1"/>
    <property type="match status" value="1"/>
</dbReference>
<dbReference type="NCBIfam" id="NF010872">
    <property type="entry name" value="PRK14279.1"/>
    <property type="match status" value="1"/>
</dbReference>
<dbReference type="PANTHER" id="PTHR43096:SF54">
    <property type="entry name" value="CHAPERONE PROTEIN DNAJ 1"/>
    <property type="match status" value="1"/>
</dbReference>
<dbReference type="PANTHER" id="PTHR43096">
    <property type="entry name" value="DNAJ HOMOLOG 1, MITOCHONDRIAL-RELATED"/>
    <property type="match status" value="1"/>
</dbReference>
<dbReference type="Pfam" id="PF00226">
    <property type="entry name" value="DnaJ"/>
    <property type="match status" value="1"/>
</dbReference>
<dbReference type="Pfam" id="PF01556">
    <property type="entry name" value="DnaJ_C"/>
    <property type="match status" value="1"/>
</dbReference>
<dbReference type="Pfam" id="PF00684">
    <property type="entry name" value="DnaJ_CXXCXGXG"/>
    <property type="match status" value="1"/>
</dbReference>
<dbReference type="PRINTS" id="PR00625">
    <property type="entry name" value="JDOMAIN"/>
</dbReference>
<dbReference type="SMART" id="SM00271">
    <property type="entry name" value="DnaJ"/>
    <property type="match status" value="1"/>
</dbReference>
<dbReference type="SUPFAM" id="SSF46565">
    <property type="entry name" value="Chaperone J-domain"/>
    <property type="match status" value="1"/>
</dbReference>
<dbReference type="SUPFAM" id="SSF57938">
    <property type="entry name" value="DnaJ/Hsp40 cysteine-rich domain"/>
    <property type="match status" value="1"/>
</dbReference>
<dbReference type="SUPFAM" id="SSF49493">
    <property type="entry name" value="HSP40/DnaJ peptide-binding domain"/>
    <property type="match status" value="2"/>
</dbReference>
<dbReference type="PROSITE" id="PS00636">
    <property type="entry name" value="DNAJ_1"/>
    <property type="match status" value="1"/>
</dbReference>
<dbReference type="PROSITE" id="PS50076">
    <property type="entry name" value="DNAJ_2"/>
    <property type="match status" value="1"/>
</dbReference>
<dbReference type="PROSITE" id="PS51188">
    <property type="entry name" value="ZF_CR"/>
    <property type="match status" value="1"/>
</dbReference>
<proteinExistence type="inferred from homology"/>
<keyword id="KW-0143">Chaperone</keyword>
<keyword id="KW-0963">Cytoplasm</keyword>
<keyword id="KW-0235">DNA replication</keyword>
<keyword id="KW-0479">Metal-binding</keyword>
<keyword id="KW-1185">Reference proteome</keyword>
<keyword id="KW-0677">Repeat</keyword>
<keyword id="KW-0346">Stress response</keyword>
<keyword id="KW-0862">Zinc</keyword>
<keyword id="KW-0863">Zinc-finger</keyword>
<accession>P9WNV8</accession>
<accession>A7BJ09</accession>
<accession>F2GN42</accession>
<accession>O08380</accession>
<accession>P07881</accession>
<accession>P0A548</accession>